<feature type="chain" id="PRO_1000011532" description="4-hydroxy-3-methylbut-2-en-1-yl diphosphate synthase (ferredoxin)">
    <location>
        <begin position="1"/>
        <end position="412"/>
    </location>
</feature>
<feature type="region of interest" description="Disordered" evidence="2">
    <location>
        <begin position="1"/>
        <end position="22"/>
    </location>
</feature>
<feature type="compositionally biased region" description="Polar residues" evidence="2">
    <location>
        <begin position="1"/>
        <end position="12"/>
    </location>
</feature>
<feature type="binding site" evidence="1">
    <location>
        <position position="314"/>
    </location>
    <ligand>
        <name>[4Fe-4S] cluster</name>
        <dbReference type="ChEBI" id="CHEBI:49883"/>
    </ligand>
</feature>
<feature type="binding site" evidence="1">
    <location>
        <position position="317"/>
    </location>
    <ligand>
        <name>[4Fe-4S] cluster</name>
        <dbReference type="ChEBI" id="CHEBI:49883"/>
    </ligand>
</feature>
<feature type="binding site" evidence="1">
    <location>
        <position position="348"/>
    </location>
    <ligand>
        <name>[4Fe-4S] cluster</name>
        <dbReference type="ChEBI" id="CHEBI:49883"/>
    </ligand>
</feature>
<feature type="binding site" evidence="1">
    <location>
        <position position="355"/>
    </location>
    <ligand>
        <name>[4Fe-4S] cluster</name>
        <dbReference type="ChEBI" id="CHEBI:49883"/>
    </ligand>
</feature>
<gene>
    <name evidence="1" type="primary">ispG</name>
    <name type="ordered locus">CYA_2387</name>
</gene>
<comment type="function">
    <text evidence="1">Converts 2C-methyl-D-erythritol 2,4-cyclodiphosphate (ME-2,4cPP) into 1-hydroxy-2-methyl-2-(E)-butenyl 4-diphosphate.</text>
</comment>
<comment type="catalytic activity">
    <reaction evidence="1">
        <text>(2E)-4-hydroxy-3-methylbut-2-enyl diphosphate + 2 oxidized [2Fe-2S]-[ferredoxin] + H2O = 2-C-methyl-D-erythritol 2,4-cyclic diphosphate + 2 reduced [2Fe-2S]-[ferredoxin] + H(+)</text>
        <dbReference type="Rhea" id="RHEA:26119"/>
        <dbReference type="Rhea" id="RHEA-COMP:10000"/>
        <dbReference type="Rhea" id="RHEA-COMP:10001"/>
        <dbReference type="ChEBI" id="CHEBI:15377"/>
        <dbReference type="ChEBI" id="CHEBI:15378"/>
        <dbReference type="ChEBI" id="CHEBI:33737"/>
        <dbReference type="ChEBI" id="CHEBI:33738"/>
        <dbReference type="ChEBI" id="CHEBI:58483"/>
        <dbReference type="ChEBI" id="CHEBI:128753"/>
        <dbReference type="EC" id="1.17.7.1"/>
    </reaction>
</comment>
<comment type="cofactor">
    <cofactor evidence="1">
        <name>[4Fe-4S] cluster</name>
        <dbReference type="ChEBI" id="CHEBI:49883"/>
    </cofactor>
    <text evidence="1">Binds 1 [4Fe-4S] cluster.</text>
</comment>
<comment type="pathway">
    <text evidence="1">Isoprenoid biosynthesis; isopentenyl diphosphate biosynthesis via DXP pathway; isopentenyl diphosphate from 1-deoxy-D-xylulose 5-phosphate: step 5/6.</text>
</comment>
<comment type="similarity">
    <text evidence="1">Belongs to the IspG family.</text>
</comment>
<accession>Q2JS69</accession>
<dbReference type="EC" id="1.17.7.1" evidence="1"/>
<dbReference type="EMBL" id="CP000239">
    <property type="protein sequence ID" value="ABD00513.1"/>
    <property type="molecule type" value="Genomic_DNA"/>
</dbReference>
<dbReference type="RefSeq" id="WP_011431186.1">
    <property type="nucleotide sequence ID" value="NC_007775.1"/>
</dbReference>
<dbReference type="SMR" id="Q2JS69"/>
<dbReference type="STRING" id="321327.CYA_2387"/>
<dbReference type="KEGG" id="cya:CYA_2387"/>
<dbReference type="eggNOG" id="COG0821">
    <property type="taxonomic scope" value="Bacteria"/>
</dbReference>
<dbReference type="HOGENOM" id="CLU_042258_0_0_3"/>
<dbReference type="OrthoDB" id="9803214at2"/>
<dbReference type="UniPathway" id="UPA00056">
    <property type="reaction ID" value="UER00096"/>
</dbReference>
<dbReference type="Proteomes" id="UP000008818">
    <property type="component" value="Chromosome"/>
</dbReference>
<dbReference type="GO" id="GO:0051539">
    <property type="term" value="F:4 iron, 4 sulfur cluster binding"/>
    <property type="evidence" value="ECO:0007669"/>
    <property type="project" value="UniProtKB-UniRule"/>
</dbReference>
<dbReference type="GO" id="GO:0046429">
    <property type="term" value="F:4-hydroxy-3-methylbut-2-en-1-yl diphosphate synthase activity (ferredoxin)"/>
    <property type="evidence" value="ECO:0007669"/>
    <property type="project" value="UniProtKB-UniRule"/>
</dbReference>
<dbReference type="GO" id="GO:0005506">
    <property type="term" value="F:iron ion binding"/>
    <property type="evidence" value="ECO:0007669"/>
    <property type="project" value="InterPro"/>
</dbReference>
<dbReference type="GO" id="GO:0019288">
    <property type="term" value="P:isopentenyl diphosphate biosynthetic process, methylerythritol 4-phosphate pathway"/>
    <property type="evidence" value="ECO:0007669"/>
    <property type="project" value="UniProtKB-UniRule"/>
</dbReference>
<dbReference type="GO" id="GO:0016114">
    <property type="term" value="P:terpenoid biosynthetic process"/>
    <property type="evidence" value="ECO:0007669"/>
    <property type="project" value="InterPro"/>
</dbReference>
<dbReference type="FunFam" id="3.20.20.20:FF:000005">
    <property type="entry name" value="4-hydroxy-3-methylbut-2-en-1-yl diphosphate synthase (flavodoxin)"/>
    <property type="match status" value="1"/>
</dbReference>
<dbReference type="FunFam" id="3.30.413.10:FF:000006">
    <property type="entry name" value="4-hydroxy-3-methylbut-2-en-1-yl diphosphate synthase (flavodoxin)"/>
    <property type="match status" value="1"/>
</dbReference>
<dbReference type="Gene3D" id="3.20.20.20">
    <property type="entry name" value="Dihydropteroate synthase-like"/>
    <property type="match status" value="1"/>
</dbReference>
<dbReference type="Gene3D" id="3.30.413.10">
    <property type="entry name" value="Sulfite Reductase Hemoprotein, domain 1"/>
    <property type="match status" value="1"/>
</dbReference>
<dbReference type="HAMAP" id="MF_00159">
    <property type="entry name" value="IspG"/>
    <property type="match status" value="1"/>
</dbReference>
<dbReference type="InterPro" id="IPR011005">
    <property type="entry name" value="Dihydropteroate_synth-like_sf"/>
</dbReference>
<dbReference type="InterPro" id="IPR016425">
    <property type="entry name" value="IspG_bac"/>
</dbReference>
<dbReference type="InterPro" id="IPR004588">
    <property type="entry name" value="IspG_bac-typ"/>
</dbReference>
<dbReference type="InterPro" id="IPR045854">
    <property type="entry name" value="NO2/SO3_Rdtase_4Fe4S_sf"/>
</dbReference>
<dbReference type="NCBIfam" id="TIGR00612">
    <property type="entry name" value="ispG_gcpE"/>
    <property type="match status" value="1"/>
</dbReference>
<dbReference type="NCBIfam" id="NF001540">
    <property type="entry name" value="PRK00366.1"/>
    <property type="match status" value="1"/>
</dbReference>
<dbReference type="PANTHER" id="PTHR30454">
    <property type="entry name" value="4-HYDROXY-3-METHYLBUT-2-EN-1-YL DIPHOSPHATE SYNTHASE"/>
    <property type="match status" value="1"/>
</dbReference>
<dbReference type="PANTHER" id="PTHR30454:SF0">
    <property type="entry name" value="4-HYDROXY-3-METHYLBUT-2-EN-1-YL DIPHOSPHATE SYNTHASE (FERREDOXIN), CHLOROPLASTIC"/>
    <property type="match status" value="1"/>
</dbReference>
<dbReference type="Pfam" id="PF04551">
    <property type="entry name" value="GcpE"/>
    <property type="match status" value="1"/>
</dbReference>
<dbReference type="PIRSF" id="PIRSF004640">
    <property type="entry name" value="IspG"/>
    <property type="match status" value="1"/>
</dbReference>
<dbReference type="SUPFAM" id="SSF56014">
    <property type="entry name" value="Nitrite and sulphite reductase 4Fe-4S domain-like"/>
    <property type="match status" value="1"/>
</dbReference>
<evidence type="ECO:0000255" key="1">
    <source>
        <dbReference type="HAMAP-Rule" id="MF_00159"/>
    </source>
</evidence>
<evidence type="ECO:0000256" key="2">
    <source>
        <dbReference type="SAM" id="MobiDB-lite"/>
    </source>
</evidence>
<protein>
    <recommendedName>
        <fullName evidence="1">4-hydroxy-3-methylbut-2-en-1-yl diphosphate synthase (ferredoxin)</fullName>
        <ecNumber evidence="1">1.17.7.1</ecNumber>
    </recommendedName>
    <alternativeName>
        <fullName evidence="1">1-hydroxy-2-methyl-2-(E)-butenyl 4-diphosphate synthase</fullName>
    </alternativeName>
</protein>
<keyword id="KW-0004">4Fe-4S</keyword>
<keyword id="KW-0408">Iron</keyword>
<keyword id="KW-0411">Iron-sulfur</keyword>
<keyword id="KW-0414">Isoprene biosynthesis</keyword>
<keyword id="KW-0479">Metal-binding</keyword>
<keyword id="KW-0560">Oxidoreductase</keyword>
<organism>
    <name type="scientific">Synechococcus sp. (strain JA-3-3Ab)</name>
    <name type="common">Cyanobacteria bacterium Yellowstone A-Prime</name>
    <dbReference type="NCBI Taxonomy" id="321327"/>
    <lineage>
        <taxon>Bacteria</taxon>
        <taxon>Bacillati</taxon>
        <taxon>Cyanobacteriota</taxon>
        <taxon>Cyanophyceae</taxon>
        <taxon>Synechococcales</taxon>
        <taxon>Synechococcaceae</taxon>
        <taxon>Synechococcus</taxon>
    </lineage>
</organism>
<proteinExistence type="inferred from homology"/>
<reference key="1">
    <citation type="journal article" date="2007" name="ISME J.">
        <title>Population level functional diversity in a microbial community revealed by comparative genomic and metagenomic analyses.</title>
        <authorList>
            <person name="Bhaya D."/>
            <person name="Grossman A.R."/>
            <person name="Steunou A.-S."/>
            <person name="Khuri N."/>
            <person name="Cohan F.M."/>
            <person name="Hamamura N."/>
            <person name="Melendrez M.C."/>
            <person name="Bateson M.M."/>
            <person name="Ward D.M."/>
            <person name="Heidelberg J.F."/>
        </authorList>
    </citation>
    <scope>NUCLEOTIDE SEQUENCE [LARGE SCALE GENOMIC DNA]</scope>
    <source>
        <strain>JA-3-3Ab</strain>
    </source>
</reference>
<sequence>MQTLDRPNAPSQQPYPEPVYPRRPTRTVAVGNVLIGSQHPVVVQSMINEDTLDIDAAVAAIRRLHEAGSEIVRVTVPSMAHAKAMEAIRSKLIQTYKPVPLVADVHHNGIKIALEVAQYVDKVRINPGLFVLEKPQPGRTEYTQAELEAIRNKIRETFTPLVQTLKAQNKALRIGVNHGSLAERMLFMYGDTPEGMVESALEYAEICAEQDFHNVVLSFKASRPQVMLAAYRLAARRFDALGLNYPFHLGVTEAGDGEYGRIKSAVGIGTLLAEGIGDTIRVSLTEAPEKEIPVAYGILQALNLRKTMVEYVACPSCGRTLFNLEEVLQKVRAATQHLVGLDIAVMGCIVNGPGEMADADYGYVGKTPGYISLYRGKEEVKKVPESEGVQALIELIKADGRWVDPPEGSPSN</sequence>
<name>ISPG_SYNJA</name>